<proteinExistence type="evidence at protein level"/>
<comment type="function">
    <text evidence="4 5">Specific in hydrolyzing the terminal glycosidic bond of polygalacturonic acid and oligogalacturonates. Has no activity towards trigalacturonic acid.</text>
</comment>
<comment type="catalytic activity">
    <reaction evidence="4 5">
        <text>[(1-&gt;4)-alpha-D-galacturonosyl](n) + H2O = alpha-D-galacturonate + [(1-&gt;4)-alpha-D-galacturonosyl](n-1)</text>
        <dbReference type="Rhea" id="RHEA:14117"/>
        <dbReference type="Rhea" id="RHEA-COMP:14570"/>
        <dbReference type="Rhea" id="RHEA-COMP:14572"/>
        <dbReference type="ChEBI" id="CHEBI:15377"/>
        <dbReference type="ChEBI" id="CHEBI:58658"/>
        <dbReference type="ChEBI" id="CHEBI:140523"/>
        <dbReference type="EC" id="3.2.1.67"/>
    </reaction>
</comment>
<comment type="biophysicochemical properties">
    <phDependence>
        <text evidence="5">Optimum pH is 4.0.</text>
    </phDependence>
    <temperatureDependence>
        <text evidence="5">Optimum temperature is 40 degrees Celsius.</text>
    </temperatureDependence>
</comment>
<comment type="subcellular location">
    <subcellularLocation>
        <location evidence="8 9">Secreted</location>
    </subcellularLocation>
</comment>
<comment type="PTM">
    <text evidence="5">N-glycosylated.</text>
</comment>
<comment type="similarity">
    <text evidence="7">Belongs to the glycosyl hydrolase 28 family.</text>
</comment>
<accession>I1BPS7</accession>
<gene>
    <name evidence="6" type="primary">rpg13</name>
    <name type="ORF">RO3G_02911</name>
</gene>
<evidence type="ECO:0000250" key="1">
    <source>
        <dbReference type="UniProtKB" id="O74213"/>
    </source>
</evidence>
<evidence type="ECO:0000255" key="2"/>
<evidence type="ECO:0000255" key="3">
    <source>
        <dbReference type="PROSITE-ProRule" id="PRU00498"/>
    </source>
</evidence>
<evidence type="ECO:0000269" key="4">
    <source>
    </source>
</evidence>
<evidence type="ECO:0000269" key="5">
    <source>
    </source>
</evidence>
<evidence type="ECO:0000303" key="6">
    <source>
    </source>
</evidence>
<evidence type="ECO:0000305" key="7"/>
<evidence type="ECO:0000305" key="8">
    <source>
    </source>
</evidence>
<evidence type="ECO:0000305" key="9">
    <source>
    </source>
</evidence>
<protein>
    <recommendedName>
        <fullName evidence="6">Exopolygalacturonase rpg13</fullName>
        <ecNumber evidence="4">3.2.1.67</ecNumber>
    </recommendedName>
    <alternativeName>
        <fullName evidence="7">Galacturan 1,4-alpha-galacturonidase rpg13</fullName>
    </alternativeName>
    <alternativeName>
        <fullName evidence="7">Poly(1,4-alpha-D-galacturonide)galacturonohydrolase rpg13</fullName>
    </alternativeName>
</protein>
<dbReference type="EC" id="3.2.1.67" evidence="4"/>
<dbReference type="EMBL" id="CH476733">
    <property type="protein sequence ID" value="EIE78207.1"/>
    <property type="molecule type" value="Genomic_DNA"/>
</dbReference>
<dbReference type="SMR" id="I1BPS7"/>
<dbReference type="STRING" id="246409.I1BPS7"/>
<dbReference type="GlyCosmos" id="I1BPS7">
    <property type="glycosylation" value="5 sites, No reported glycans"/>
</dbReference>
<dbReference type="VEuPathDB" id="FungiDB:RO3G_02911"/>
<dbReference type="eggNOG" id="ENOG502QPPR">
    <property type="taxonomic scope" value="Eukaryota"/>
</dbReference>
<dbReference type="InParanoid" id="I1BPS7"/>
<dbReference type="OMA" id="WGGNDIN"/>
<dbReference type="OrthoDB" id="30502at4827"/>
<dbReference type="Proteomes" id="UP000009138">
    <property type="component" value="Unassembled WGS sequence"/>
</dbReference>
<dbReference type="GO" id="GO:0005576">
    <property type="term" value="C:extracellular region"/>
    <property type="evidence" value="ECO:0007669"/>
    <property type="project" value="UniProtKB-SubCell"/>
</dbReference>
<dbReference type="GO" id="GO:0047911">
    <property type="term" value="F:galacturan 1,4-alpha-galacturonidase activity"/>
    <property type="evidence" value="ECO:0007669"/>
    <property type="project" value="UniProtKB-EC"/>
</dbReference>
<dbReference type="GO" id="GO:0004650">
    <property type="term" value="F:polygalacturonase activity"/>
    <property type="evidence" value="ECO:0007669"/>
    <property type="project" value="InterPro"/>
</dbReference>
<dbReference type="GO" id="GO:0046576">
    <property type="term" value="F:rhamnogalacturonan alpha-L-rhamnopyranosyl-(1-&gt;4)-alpha-D-galactopyranosyluronide lyase activity"/>
    <property type="evidence" value="ECO:0007669"/>
    <property type="project" value="UniProtKB-ARBA"/>
</dbReference>
<dbReference type="GO" id="GO:0071555">
    <property type="term" value="P:cell wall organization"/>
    <property type="evidence" value="ECO:0007669"/>
    <property type="project" value="UniProtKB-KW"/>
</dbReference>
<dbReference type="GO" id="GO:0045490">
    <property type="term" value="P:pectin catabolic process"/>
    <property type="evidence" value="ECO:0007669"/>
    <property type="project" value="UniProtKB-ARBA"/>
</dbReference>
<dbReference type="Gene3D" id="2.160.20.10">
    <property type="entry name" value="Single-stranded right-handed beta-helix, Pectin lyase-like"/>
    <property type="match status" value="1"/>
</dbReference>
<dbReference type="InterPro" id="IPR000743">
    <property type="entry name" value="Glyco_hydro_28"/>
</dbReference>
<dbReference type="InterPro" id="IPR006626">
    <property type="entry name" value="PbH1"/>
</dbReference>
<dbReference type="InterPro" id="IPR012334">
    <property type="entry name" value="Pectin_lyas_fold"/>
</dbReference>
<dbReference type="InterPro" id="IPR011050">
    <property type="entry name" value="Pectin_lyase_fold/virulence"/>
</dbReference>
<dbReference type="PANTHER" id="PTHR31736">
    <property type="match status" value="1"/>
</dbReference>
<dbReference type="PANTHER" id="PTHR31736:SF19">
    <property type="entry name" value="PECTIN LYASE SUPERFAMILY PROTEIN-RELATED"/>
    <property type="match status" value="1"/>
</dbReference>
<dbReference type="Pfam" id="PF00295">
    <property type="entry name" value="Glyco_hydro_28"/>
    <property type="match status" value="1"/>
</dbReference>
<dbReference type="SMART" id="SM00710">
    <property type="entry name" value="PbH1"/>
    <property type="match status" value="6"/>
</dbReference>
<dbReference type="SUPFAM" id="SSF51126">
    <property type="entry name" value="Pectin lyase-like"/>
    <property type="match status" value="1"/>
</dbReference>
<keyword id="KW-0961">Cell wall biogenesis/degradation</keyword>
<keyword id="KW-1015">Disulfide bond</keyword>
<keyword id="KW-0325">Glycoprotein</keyword>
<keyword id="KW-0326">Glycosidase</keyword>
<keyword id="KW-0378">Hydrolase</keyword>
<keyword id="KW-1185">Reference proteome</keyword>
<keyword id="KW-0677">Repeat</keyword>
<keyword id="KW-0964">Secreted</keyword>
<keyword id="KW-0732">Signal</keyword>
<name>RPG13_RHIO9</name>
<feature type="signal peptide" evidence="2">
    <location>
        <begin position="1"/>
        <end position="26"/>
    </location>
</feature>
<feature type="chain" id="PRO_0000432724" description="Exopolygalacturonase rpg13" evidence="2">
    <location>
        <begin position="27"/>
        <end position="363"/>
    </location>
</feature>
<feature type="repeat" description="PbH1 1" evidence="2">
    <location>
        <begin position="143"/>
        <end position="173"/>
    </location>
</feature>
<feature type="repeat" description="PbH1 2" evidence="2">
    <location>
        <begin position="174"/>
        <end position="195"/>
    </location>
</feature>
<feature type="repeat" description="PbH1 3" evidence="2">
    <location>
        <begin position="197"/>
        <end position="217"/>
    </location>
</feature>
<feature type="repeat" description="PbH1 4" evidence="2">
    <location>
        <begin position="227"/>
        <end position="248"/>
    </location>
</feature>
<feature type="repeat" description="PbH1 5" evidence="2">
    <location>
        <begin position="256"/>
        <end position="277"/>
    </location>
</feature>
<feature type="repeat" description="PbH1 6" evidence="2">
    <location>
        <begin position="328"/>
        <end position="354"/>
    </location>
</feature>
<feature type="active site" description="Proton donor" evidence="1">
    <location>
        <position position="188"/>
    </location>
</feature>
<feature type="active site" evidence="1">
    <location>
        <position position="211"/>
    </location>
</feature>
<feature type="glycosylation site" description="N-linked (GlcNAc...) asparagine" evidence="3">
    <location>
        <position position="121"/>
    </location>
</feature>
<feature type="glycosylation site" description="N-linked (GlcNAc...) asparagine" evidence="3">
    <location>
        <position position="142"/>
    </location>
</feature>
<feature type="glycosylation site" description="N-linked (GlcNAc...) asparagine" evidence="3">
    <location>
        <position position="150"/>
    </location>
</feature>
<feature type="glycosylation site" description="N-linked (GlcNAc...) asparagine" evidence="3">
    <location>
        <position position="199"/>
    </location>
</feature>
<feature type="glycosylation site" description="N-linked (GlcNAc...) asparagine" evidence="3">
    <location>
        <position position="321"/>
    </location>
</feature>
<feature type="disulfide bond" evidence="1">
    <location>
        <begin position="190"/>
        <end position="207"/>
    </location>
</feature>
<feature type="disulfide bond" evidence="1">
    <location>
        <begin position="322"/>
        <end position="328"/>
    </location>
</feature>
<organism>
    <name type="scientific">Rhizopus delemar (strain RA 99-880 / ATCC MYA-4621 / FGSC 9543 / NRRL 43880)</name>
    <name type="common">Mucormycosis agent</name>
    <name type="synonym">Rhizopus arrhizus var. delemar</name>
    <dbReference type="NCBI Taxonomy" id="246409"/>
    <lineage>
        <taxon>Eukaryota</taxon>
        <taxon>Fungi</taxon>
        <taxon>Fungi incertae sedis</taxon>
        <taxon>Mucoromycota</taxon>
        <taxon>Mucoromycotina</taxon>
        <taxon>Mucoromycetes</taxon>
        <taxon>Mucorales</taxon>
        <taxon>Mucorineae</taxon>
        <taxon>Rhizopodaceae</taxon>
        <taxon>Rhizopus</taxon>
    </lineage>
</organism>
<reference key="1">
    <citation type="journal article" date="2009" name="PLoS Genet.">
        <title>Genomic analysis of the basal lineage fungus Rhizopus oryzae reveals a whole-genome duplication.</title>
        <authorList>
            <person name="Ma L.-J."/>
            <person name="Ibrahim A.S."/>
            <person name="Skory C."/>
            <person name="Grabherr M.G."/>
            <person name="Burger G."/>
            <person name="Butler M."/>
            <person name="Elias M."/>
            <person name="Idnurm A."/>
            <person name="Lang B.F."/>
            <person name="Sone T."/>
            <person name="Abe A."/>
            <person name="Calvo S.E."/>
            <person name="Corrochano L.M."/>
            <person name="Engels R."/>
            <person name="Fu J."/>
            <person name="Hansberg W."/>
            <person name="Kim J.-M."/>
            <person name="Kodira C.D."/>
            <person name="Koehrsen M.J."/>
            <person name="Liu B."/>
            <person name="Miranda-Saavedra D."/>
            <person name="O'Leary S."/>
            <person name="Ortiz-Castellanos L."/>
            <person name="Poulter R."/>
            <person name="Rodriguez-Romero J."/>
            <person name="Ruiz-Herrera J."/>
            <person name="Shen Y.-Q."/>
            <person name="Zeng Q."/>
            <person name="Galagan J."/>
            <person name="Birren B.W."/>
            <person name="Cuomo C.A."/>
            <person name="Wickes B.L."/>
        </authorList>
    </citation>
    <scope>NUCLEOTIDE SEQUENCE [LARGE SCALE GENOMIC DNA]</scope>
    <source>
        <strain>RA 99-880 / ATCC MYA-4621 / FGSC 9543 / NRRL 43880</strain>
    </source>
</reference>
<reference key="2">
    <citation type="journal article" date="2008" name="Fungal Genet. Biol.">
        <title>Identification, biochemical characterization, and evolution of the Rhizopus oryzae 99-880 polygalacturonase gene family.</title>
        <authorList>
            <person name="Mertens J.A."/>
            <person name="Burdick R.C."/>
            <person name="Rooney A.P."/>
        </authorList>
    </citation>
    <scope>FUNCTION</scope>
    <scope>CATALYTIC ACTIVITY</scope>
</reference>
<reference key="3">
    <citation type="journal article" date="2011" name="Curr. Microbiol.">
        <title>Expression and characterization of fifteen Rhizopus oryzae 99-880 polygalacturonase enzymes in Pichia pastoris.</title>
        <authorList>
            <person name="Mertens J.A."/>
            <person name="Bowman M.J."/>
        </authorList>
    </citation>
    <scope>FUNCTION</scope>
    <scope>CATALYTIC ACTIVITY</scope>
    <scope>BIOPHYSICOCHEMICAL PROPERTIES</scope>
    <scope>GLYCOSYLATION</scope>
</reference>
<sequence length="363" mass="37857">MVKFLSLTSSVTALLLLSLGANGVAAAATTCTVAKSGSDDTAAITKAFSDCKNGGTVVFSKDTTYNLNGILILSDLKNVNIELAGTIKLPGFDKAVKGLKSYIQLIGTNVKVYGGGVINANHSSVSDISIINSPRAHMGVTNATDVLINNITLHTASTSSLRPKNTDALDVSRSSNVVFQNSKLTVGDDCLAINEEVTNVTLSKITCNGGHGFSVGSLGKGGANQHVKTVRIHDSVCNDCQNGVRIKTWPGGKGSVSDIKFNNVELNNVENPILITTHYCDKNQMNYCTNNDKTSLSISDVVISDITGSASNDGNPIVSINCSTSTPCTDFTLSGVKITKASNTPKNVCVNLDGSSKIAECSA</sequence>